<protein>
    <recommendedName>
        <fullName evidence="1">NAD(P)H-quinone oxidoreductase chain 4</fullName>
        <ecNumber evidence="1">7.1.1.-</ecNumber>
    </recommendedName>
    <alternativeName>
        <fullName evidence="1">NAD(P)H dehydrogenase I, chain 4</fullName>
    </alternativeName>
    <alternativeName>
        <fullName evidence="1">NDH-1, chain 4</fullName>
    </alternativeName>
</protein>
<evidence type="ECO:0000255" key="1">
    <source>
        <dbReference type="HAMAP-Rule" id="MF_00491"/>
    </source>
</evidence>
<sequence>MLGAGLSNFPWLSASILFPIGSAFVIPFFPDKGDGKEVRWFALSIALITFLITVGSYINGFDINNENVQLKENISWLPDLGLTWSVGADGMSMPLILLTSFITALAVLAAWPVKFKPKLFFFLILVMDGGQIAVFAVQDMLLFFLTWELELIPVYLLLAIWGGKNRQYAATKFIIYTAGSSIFILLAALAMGFYGTEIPNFEFSHLAAQDFNQKFQIFCYVGLLIAFGVKLPIVPLHTWLPDAHGEATAPVHMLLAGILLKMGGYALLRFNAQLLPVAHAQFAPLLIVLGVVNIIYAALTSFAQRNLKRKIAYSSISHMGFVLIGIGSFSSLGTSGAMLQMVSHGLIGASLFFLVGATYDRTKTLKLDEMSGVGQKMRIMFALWTACSLASLALPGMSGFVSELMVFTGFVTDEVYTLPFRVVMASLAAIGVILTPIYLLSMLREIFFGKENPKLIEERKLIDAEPREVYIIACLLLPIIGIGLYPRLVTESYIASINNLVDRDLTAVKSAVKTNIFSGTKTNDILKAPTI</sequence>
<name>NU4C_PROM0</name>
<organism>
    <name type="scientific">Prochlorococcus marinus (strain MIT 9301)</name>
    <dbReference type="NCBI Taxonomy" id="167546"/>
    <lineage>
        <taxon>Bacteria</taxon>
        <taxon>Bacillati</taxon>
        <taxon>Cyanobacteriota</taxon>
        <taxon>Cyanophyceae</taxon>
        <taxon>Synechococcales</taxon>
        <taxon>Prochlorococcaceae</taxon>
        <taxon>Prochlorococcus</taxon>
    </lineage>
</organism>
<proteinExistence type="inferred from homology"/>
<gene>
    <name evidence="1" type="primary">ndhD</name>
    <name type="ordered locus">P9301_01691</name>
</gene>
<dbReference type="EC" id="7.1.1.-" evidence="1"/>
<dbReference type="EMBL" id="CP000576">
    <property type="protein sequence ID" value="ABO16792.1"/>
    <property type="molecule type" value="Genomic_DNA"/>
</dbReference>
<dbReference type="RefSeq" id="WP_011862195.1">
    <property type="nucleotide sequence ID" value="NC_009091.1"/>
</dbReference>
<dbReference type="SMR" id="A3PAL7"/>
<dbReference type="STRING" id="167546.P9301_01691"/>
<dbReference type="KEGG" id="pmg:P9301_01691"/>
<dbReference type="eggNOG" id="COG1008">
    <property type="taxonomic scope" value="Bacteria"/>
</dbReference>
<dbReference type="HOGENOM" id="CLU_007100_4_0_3"/>
<dbReference type="OrthoDB" id="9811718at2"/>
<dbReference type="Proteomes" id="UP000001430">
    <property type="component" value="Chromosome"/>
</dbReference>
<dbReference type="GO" id="GO:0031676">
    <property type="term" value="C:plasma membrane-derived thylakoid membrane"/>
    <property type="evidence" value="ECO:0007669"/>
    <property type="project" value="UniProtKB-SubCell"/>
</dbReference>
<dbReference type="GO" id="GO:0008137">
    <property type="term" value="F:NADH dehydrogenase (ubiquinone) activity"/>
    <property type="evidence" value="ECO:0007669"/>
    <property type="project" value="InterPro"/>
</dbReference>
<dbReference type="GO" id="GO:0048039">
    <property type="term" value="F:ubiquinone binding"/>
    <property type="evidence" value="ECO:0007669"/>
    <property type="project" value="TreeGrafter"/>
</dbReference>
<dbReference type="GO" id="GO:0042773">
    <property type="term" value="P:ATP synthesis coupled electron transport"/>
    <property type="evidence" value="ECO:0007669"/>
    <property type="project" value="InterPro"/>
</dbReference>
<dbReference type="GO" id="GO:0015990">
    <property type="term" value="P:electron transport coupled proton transport"/>
    <property type="evidence" value="ECO:0007669"/>
    <property type="project" value="TreeGrafter"/>
</dbReference>
<dbReference type="HAMAP" id="MF_00491">
    <property type="entry name" value="NDH1_NuoM"/>
    <property type="match status" value="1"/>
</dbReference>
<dbReference type="InterPro" id="IPR022997">
    <property type="entry name" value="NADH_Q_OxRdtase_chain4"/>
</dbReference>
<dbReference type="InterPro" id="IPR010227">
    <property type="entry name" value="NADH_Q_OxRdtase_chainM/4"/>
</dbReference>
<dbReference type="InterPro" id="IPR003918">
    <property type="entry name" value="NADH_UbQ_OxRdtase"/>
</dbReference>
<dbReference type="InterPro" id="IPR001750">
    <property type="entry name" value="ND/Mrp_TM"/>
</dbReference>
<dbReference type="NCBIfam" id="TIGR01972">
    <property type="entry name" value="NDH_I_M"/>
    <property type="match status" value="1"/>
</dbReference>
<dbReference type="NCBIfam" id="NF002713">
    <property type="entry name" value="PRK02546.1"/>
    <property type="match status" value="1"/>
</dbReference>
<dbReference type="NCBIfam" id="NF009212">
    <property type="entry name" value="PRK12561.1"/>
    <property type="match status" value="1"/>
</dbReference>
<dbReference type="PANTHER" id="PTHR43507:SF21">
    <property type="entry name" value="NAD(P)H-QUINONE OXIDOREDUCTASE CHAIN 4, CHLOROPLASTIC"/>
    <property type="match status" value="1"/>
</dbReference>
<dbReference type="PANTHER" id="PTHR43507">
    <property type="entry name" value="NADH-UBIQUINONE OXIDOREDUCTASE CHAIN 4"/>
    <property type="match status" value="1"/>
</dbReference>
<dbReference type="Pfam" id="PF00361">
    <property type="entry name" value="Proton_antipo_M"/>
    <property type="match status" value="1"/>
</dbReference>
<dbReference type="PRINTS" id="PR01437">
    <property type="entry name" value="NUOXDRDTASE4"/>
</dbReference>
<comment type="function">
    <text evidence="1">NDH-1 shuttles electrons from NAD(P)H, via FMN and iron-sulfur (Fe-S) centers, to quinones in the respiratory chain. The immediate electron acceptor for the enzyme in this species is believed to be plastoquinone. Couples the redox reaction to proton translocation (for every two electrons transferred, four hydrogen ions are translocated across the cytoplasmic membrane), and thus conserves the redox energy in a proton gradient.</text>
</comment>
<comment type="catalytic activity">
    <reaction evidence="1">
        <text>a plastoquinone + NADH + (n+1) H(+)(in) = a plastoquinol + NAD(+) + n H(+)(out)</text>
        <dbReference type="Rhea" id="RHEA:42608"/>
        <dbReference type="Rhea" id="RHEA-COMP:9561"/>
        <dbReference type="Rhea" id="RHEA-COMP:9562"/>
        <dbReference type="ChEBI" id="CHEBI:15378"/>
        <dbReference type="ChEBI" id="CHEBI:17757"/>
        <dbReference type="ChEBI" id="CHEBI:57540"/>
        <dbReference type="ChEBI" id="CHEBI:57945"/>
        <dbReference type="ChEBI" id="CHEBI:62192"/>
    </reaction>
</comment>
<comment type="catalytic activity">
    <reaction evidence="1">
        <text>a plastoquinone + NADPH + (n+1) H(+)(in) = a plastoquinol + NADP(+) + n H(+)(out)</text>
        <dbReference type="Rhea" id="RHEA:42612"/>
        <dbReference type="Rhea" id="RHEA-COMP:9561"/>
        <dbReference type="Rhea" id="RHEA-COMP:9562"/>
        <dbReference type="ChEBI" id="CHEBI:15378"/>
        <dbReference type="ChEBI" id="CHEBI:17757"/>
        <dbReference type="ChEBI" id="CHEBI:57783"/>
        <dbReference type="ChEBI" id="CHEBI:58349"/>
        <dbReference type="ChEBI" id="CHEBI:62192"/>
    </reaction>
</comment>
<comment type="subcellular location">
    <subcellularLocation>
        <location evidence="1">Cellular thylakoid membrane</location>
        <topology evidence="1">Multi-pass membrane protein</topology>
    </subcellularLocation>
</comment>
<comment type="similarity">
    <text evidence="1">Belongs to the complex I subunit 4 family.</text>
</comment>
<feature type="chain" id="PRO_0000343237" description="NAD(P)H-quinone oxidoreductase chain 4">
    <location>
        <begin position="1"/>
        <end position="531"/>
    </location>
</feature>
<feature type="transmembrane region" description="Helical" evidence="1">
    <location>
        <begin position="9"/>
        <end position="29"/>
    </location>
</feature>
<feature type="transmembrane region" description="Helical" evidence="1">
    <location>
        <begin position="41"/>
        <end position="61"/>
    </location>
</feature>
<feature type="transmembrane region" description="Helical" evidence="1">
    <location>
        <begin position="93"/>
        <end position="113"/>
    </location>
</feature>
<feature type="transmembrane region" description="Helical" evidence="1">
    <location>
        <begin position="117"/>
        <end position="137"/>
    </location>
</feature>
<feature type="transmembrane region" description="Helical" evidence="1">
    <location>
        <begin position="141"/>
        <end position="161"/>
    </location>
</feature>
<feature type="transmembrane region" description="Helical" evidence="1">
    <location>
        <begin position="173"/>
        <end position="193"/>
    </location>
</feature>
<feature type="transmembrane region" description="Helical" evidence="1">
    <location>
        <begin position="217"/>
        <end position="237"/>
    </location>
</feature>
<feature type="transmembrane region" description="Helical" evidence="1">
    <location>
        <begin position="248"/>
        <end position="268"/>
    </location>
</feature>
<feature type="transmembrane region" description="Helical" evidence="1">
    <location>
        <begin position="282"/>
        <end position="302"/>
    </location>
</feature>
<feature type="transmembrane region" description="Helical" evidence="1">
    <location>
        <begin position="311"/>
        <end position="331"/>
    </location>
</feature>
<feature type="transmembrane region" description="Helical" evidence="1">
    <location>
        <begin position="337"/>
        <end position="357"/>
    </location>
</feature>
<feature type="transmembrane region" description="Helical" evidence="1">
    <location>
        <begin position="381"/>
        <end position="401"/>
    </location>
</feature>
<feature type="transmembrane region" description="Helical" evidence="1">
    <location>
        <begin position="422"/>
        <end position="442"/>
    </location>
</feature>
<feature type="transmembrane region" description="Helical" evidence="1">
    <location>
        <begin position="469"/>
        <end position="489"/>
    </location>
</feature>
<accession>A3PAL7</accession>
<reference key="1">
    <citation type="journal article" date="2007" name="PLoS Genet.">
        <title>Patterns and implications of gene gain and loss in the evolution of Prochlorococcus.</title>
        <authorList>
            <person name="Kettler G.C."/>
            <person name="Martiny A.C."/>
            <person name="Huang K."/>
            <person name="Zucker J."/>
            <person name="Coleman M.L."/>
            <person name="Rodrigue S."/>
            <person name="Chen F."/>
            <person name="Lapidus A."/>
            <person name="Ferriera S."/>
            <person name="Johnson J."/>
            <person name="Steglich C."/>
            <person name="Church G.M."/>
            <person name="Richardson P."/>
            <person name="Chisholm S.W."/>
        </authorList>
    </citation>
    <scope>NUCLEOTIDE SEQUENCE [LARGE SCALE GENOMIC DNA]</scope>
    <source>
        <strain>MIT 9301</strain>
    </source>
</reference>
<keyword id="KW-0472">Membrane</keyword>
<keyword id="KW-0520">NAD</keyword>
<keyword id="KW-0521">NADP</keyword>
<keyword id="KW-0618">Plastoquinone</keyword>
<keyword id="KW-0874">Quinone</keyword>
<keyword id="KW-1185">Reference proteome</keyword>
<keyword id="KW-0793">Thylakoid</keyword>
<keyword id="KW-1278">Translocase</keyword>
<keyword id="KW-0812">Transmembrane</keyword>
<keyword id="KW-1133">Transmembrane helix</keyword>